<dbReference type="EMBL" id="AB292810">
    <property type="protein sequence ID" value="BAF75465.1"/>
    <property type="molecule type" value="mRNA"/>
</dbReference>
<dbReference type="GO" id="GO:0005576">
    <property type="term" value="C:extracellular region"/>
    <property type="evidence" value="ECO:0007669"/>
    <property type="project" value="UniProtKB-SubCell"/>
</dbReference>
<dbReference type="GO" id="GO:0090729">
    <property type="term" value="F:toxin activity"/>
    <property type="evidence" value="ECO:0007669"/>
    <property type="project" value="UniProtKB-KW"/>
</dbReference>
<dbReference type="GO" id="GO:0035899">
    <property type="term" value="P:suppression of blood coagulation in another organism"/>
    <property type="evidence" value="ECO:0000314"/>
    <property type="project" value="UniProtKB"/>
</dbReference>
<dbReference type="GO" id="GO:0030682">
    <property type="term" value="P:symbiont-mediated perturbation of host defenses"/>
    <property type="evidence" value="ECO:0007669"/>
    <property type="project" value="InterPro"/>
</dbReference>
<dbReference type="CDD" id="cd19423">
    <property type="entry name" value="lipocalin_LTBP1-like"/>
    <property type="match status" value="1"/>
</dbReference>
<dbReference type="Gene3D" id="2.40.128.20">
    <property type="match status" value="1"/>
</dbReference>
<dbReference type="InterPro" id="IPR012674">
    <property type="entry name" value="Calycin"/>
</dbReference>
<dbReference type="InterPro" id="IPR005657">
    <property type="entry name" value="Triabi/Procalin"/>
</dbReference>
<dbReference type="Pfam" id="PF03973">
    <property type="entry name" value="Triabin"/>
    <property type="match status" value="1"/>
</dbReference>
<dbReference type="SUPFAM" id="SSF50814">
    <property type="entry name" value="Lipocalins"/>
    <property type="match status" value="1"/>
</dbReference>
<organism evidence="6">
    <name type="scientific">Triatoma infestans</name>
    <name type="common">Assassin bug</name>
    <dbReference type="NCBI Taxonomy" id="30076"/>
    <lineage>
        <taxon>Eukaryota</taxon>
        <taxon>Metazoa</taxon>
        <taxon>Ecdysozoa</taxon>
        <taxon>Arthropoda</taxon>
        <taxon>Hexapoda</taxon>
        <taxon>Insecta</taxon>
        <taxon>Pterygota</taxon>
        <taxon>Neoptera</taxon>
        <taxon>Paraneoptera</taxon>
        <taxon>Hemiptera</taxon>
        <taxon>Heteroptera</taxon>
        <taxon>Panheteroptera</taxon>
        <taxon>Cimicomorpha</taxon>
        <taxon>Reduviidae</taxon>
        <taxon>Triatominae</taxon>
        <taxon>Triatoma</taxon>
    </lineage>
</organism>
<evidence type="ECO:0000255" key="1"/>
<evidence type="ECO:0000255" key="2">
    <source>
        <dbReference type="PROSITE-ProRule" id="PRU00498"/>
    </source>
</evidence>
<evidence type="ECO:0000269" key="3">
    <source>
    </source>
</evidence>
<evidence type="ECO:0000303" key="4">
    <source>
    </source>
</evidence>
<evidence type="ECO:0000305" key="5"/>
<evidence type="ECO:0000312" key="6">
    <source>
        <dbReference type="EMBL" id="BAF75465.1"/>
    </source>
</evidence>
<feature type="signal peptide" evidence="1">
    <location>
        <begin position="1"/>
        <end position="18"/>
    </location>
</feature>
<feature type="chain" id="PRO_5002706908" description="Triafestin-2" evidence="1">
    <location>
        <begin position="19"/>
        <end position="206"/>
    </location>
</feature>
<feature type="glycosylation site" description="N-linked (GlcNAc...) asparagine" evidence="2">
    <location>
        <position position="25"/>
    </location>
</feature>
<feature type="glycosylation site" description="N-linked (GlcNAc...) asparagine" evidence="2">
    <location>
        <position position="55"/>
    </location>
</feature>
<feature type="glycosylation site" description="N-linked (GlcNAc...) asparagine" evidence="2">
    <location>
        <position position="178"/>
    </location>
</feature>
<keyword id="KW-1203">Blood coagulation cascade inhibiting toxin</keyword>
<keyword id="KW-0325">Glycoprotein</keyword>
<keyword id="KW-1199">Hemostasis impairing toxin</keyword>
<keyword id="KW-0964">Secreted</keyword>
<keyword id="KW-0732">Signal</keyword>
<keyword id="KW-0800">Toxin</keyword>
<accession>A7BJ46</accession>
<proteinExistence type="evidence at protein level"/>
<comment type="function">
    <text evidence="3">Suppresses activation of the host plasma kallikrein-kinin system, leading to inhibition of the intrinsic coagulation pathway (PubMed:17645545). Blocks host coagulation factor XII (F12) and prekallikrein (KLKB1) reciprocal activation without affecting their amidolytic activities (PubMed:17645545). Blocks binding of host F12 and high molecular weight kininogen (KNG1) to negatively charged surfaces (PubMed:17645545). Attenuates generation of bradykinin by interfering with activation of host kallikrein-kinin system (PubMed:17645545).</text>
</comment>
<comment type="activity regulation">
    <text evidence="3">Zn(2+) modulates binding to host coagulation factor XII (F12) and high molecular weight kininogen (KNG1).</text>
</comment>
<comment type="subunit">
    <text evidence="3">Interacts with host coagulation factor XII (F12) (inactive and activated) (via amino acids 1-77) (PubMed:17645545). Interacts with host high molecular weight kininogen (KNG1) (via amino acids 402-532) (PubMed:17645545).</text>
</comment>
<comment type="subcellular location">
    <subcellularLocation>
        <location evidence="5">Secreted</location>
    </subcellularLocation>
</comment>
<comment type="tissue specificity">
    <text evidence="3">Salivary gland (at protein level).</text>
</comment>
<comment type="similarity">
    <text evidence="5">Belongs to the calycin superfamily. Triabin family.</text>
</comment>
<sequence>MKTILAVIFFGILAFAFADYPSIENCTHPPAMANFNQKKFLEGKWYVTKAKHGSNSTVCREYRAKTKGNDQILVGDGYYSFNGGTFYFTVRCKRLPNKEVQKPLQFTCTQKSTDDPSKMFKFQLEVTILDTDYANYAVMYRCVQFPEQLGSHFEDNTLLLHRNPDQLVDENQVERKLNLSFDSFRSREDVVDGCPKLPSKKKNKAS</sequence>
<protein>
    <recommendedName>
        <fullName evidence="4">Triafestin-2</fullName>
    </recommendedName>
</protein>
<name>TRIA2_TRIIF</name>
<reference evidence="6" key="1">
    <citation type="journal article" date="2007" name="FEBS J.">
        <title>Identification and characterization of plasma kallikrein-kinin system inhibitors from salivary glands of the blood-sucking insect Triatoma infestans.</title>
        <authorList>
            <person name="Isawa H."/>
            <person name="Orito Y."/>
            <person name="Jingushi N."/>
            <person name="Iwanaga S."/>
            <person name="Morita A."/>
            <person name="Chinzei Y."/>
            <person name="Yuda M."/>
        </authorList>
    </citation>
    <scope>NUCLEOTIDE SEQUENCE [MRNA]</scope>
    <scope>FUNCTION</scope>
    <scope>ACTIVITY REGULATION</scope>
    <scope>INTERACTION WITH HOST F12 AND KNG1</scope>
    <scope>TISSUE SPECIFICITY</scope>
</reference>